<keyword id="KW-0028">Amino-acid biosynthesis</keyword>
<keyword id="KW-0057">Aromatic amino acid biosynthesis</keyword>
<keyword id="KW-0274">FAD</keyword>
<keyword id="KW-0285">Flavoprotein</keyword>
<keyword id="KW-0288">FMN</keyword>
<keyword id="KW-0456">Lyase</keyword>
<keyword id="KW-0521">NADP</keyword>
<organism>
    <name type="scientific">Methanosarcina barkeri (strain Fusaro / DSM 804)</name>
    <dbReference type="NCBI Taxonomy" id="269797"/>
    <lineage>
        <taxon>Archaea</taxon>
        <taxon>Methanobacteriati</taxon>
        <taxon>Methanobacteriota</taxon>
        <taxon>Stenosarchaea group</taxon>
        <taxon>Methanomicrobia</taxon>
        <taxon>Methanosarcinales</taxon>
        <taxon>Methanosarcinaceae</taxon>
        <taxon>Methanosarcina</taxon>
    </lineage>
</organism>
<gene>
    <name evidence="1" type="primary">aroC</name>
    <name type="ordered locus">Mbar_A1438</name>
</gene>
<dbReference type="EC" id="4.2.3.5" evidence="1"/>
<dbReference type="EMBL" id="CP000099">
    <property type="protein sequence ID" value="AAZ70396.1"/>
    <property type="molecule type" value="Genomic_DNA"/>
</dbReference>
<dbReference type="SMR" id="Q46CJ6"/>
<dbReference type="STRING" id="269797.Mbar_A1438"/>
<dbReference type="PaxDb" id="269797-Mbar_A1438"/>
<dbReference type="KEGG" id="mba:Mbar_A1438"/>
<dbReference type="eggNOG" id="arCOG04133">
    <property type="taxonomic scope" value="Archaea"/>
</dbReference>
<dbReference type="HOGENOM" id="CLU_034547_0_2_2"/>
<dbReference type="OrthoDB" id="33049at2157"/>
<dbReference type="UniPathway" id="UPA00053">
    <property type="reaction ID" value="UER00090"/>
</dbReference>
<dbReference type="GO" id="GO:0005829">
    <property type="term" value="C:cytosol"/>
    <property type="evidence" value="ECO:0007669"/>
    <property type="project" value="TreeGrafter"/>
</dbReference>
<dbReference type="GO" id="GO:0004107">
    <property type="term" value="F:chorismate synthase activity"/>
    <property type="evidence" value="ECO:0007669"/>
    <property type="project" value="UniProtKB-UniRule"/>
</dbReference>
<dbReference type="GO" id="GO:0010181">
    <property type="term" value="F:FMN binding"/>
    <property type="evidence" value="ECO:0007669"/>
    <property type="project" value="TreeGrafter"/>
</dbReference>
<dbReference type="GO" id="GO:0008652">
    <property type="term" value="P:amino acid biosynthetic process"/>
    <property type="evidence" value="ECO:0007669"/>
    <property type="project" value="UniProtKB-KW"/>
</dbReference>
<dbReference type="GO" id="GO:0009073">
    <property type="term" value="P:aromatic amino acid family biosynthetic process"/>
    <property type="evidence" value="ECO:0007669"/>
    <property type="project" value="UniProtKB-KW"/>
</dbReference>
<dbReference type="GO" id="GO:0009423">
    <property type="term" value="P:chorismate biosynthetic process"/>
    <property type="evidence" value="ECO:0007669"/>
    <property type="project" value="UniProtKB-UniRule"/>
</dbReference>
<dbReference type="CDD" id="cd07304">
    <property type="entry name" value="Chorismate_synthase"/>
    <property type="match status" value="1"/>
</dbReference>
<dbReference type="FunFam" id="3.60.150.10:FF:000003">
    <property type="entry name" value="Chorismate synthase"/>
    <property type="match status" value="1"/>
</dbReference>
<dbReference type="Gene3D" id="3.60.150.10">
    <property type="entry name" value="Chorismate synthase AroC"/>
    <property type="match status" value="1"/>
</dbReference>
<dbReference type="HAMAP" id="MF_00300">
    <property type="entry name" value="Chorismate_synth"/>
    <property type="match status" value="1"/>
</dbReference>
<dbReference type="InterPro" id="IPR000453">
    <property type="entry name" value="Chorismate_synth"/>
</dbReference>
<dbReference type="InterPro" id="IPR035904">
    <property type="entry name" value="Chorismate_synth_AroC_sf"/>
</dbReference>
<dbReference type="InterPro" id="IPR020541">
    <property type="entry name" value="Chorismate_synthase_CS"/>
</dbReference>
<dbReference type="NCBIfam" id="TIGR00033">
    <property type="entry name" value="aroC"/>
    <property type="match status" value="1"/>
</dbReference>
<dbReference type="NCBIfam" id="NF003793">
    <property type="entry name" value="PRK05382.1"/>
    <property type="match status" value="1"/>
</dbReference>
<dbReference type="PANTHER" id="PTHR21085">
    <property type="entry name" value="CHORISMATE SYNTHASE"/>
    <property type="match status" value="1"/>
</dbReference>
<dbReference type="PANTHER" id="PTHR21085:SF0">
    <property type="entry name" value="CHORISMATE SYNTHASE"/>
    <property type="match status" value="1"/>
</dbReference>
<dbReference type="Pfam" id="PF01264">
    <property type="entry name" value="Chorismate_synt"/>
    <property type="match status" value="1"/>
</dbReference>
<dbReference type="PIRSF" id="PIRSF001456">
    <property type="entry name" value="Chorismate_synth"/>
    <property type="match status" value="1"/>
</dbReference>
<dbReference type="SUPFAM" id="SSF103263">
    <property type="entry name" value="Chorismate synthase, AroC"/>
    <property type="match status" value="1"/>
</dbReference>
<dbReference type="PROSITE" id="PS00787">
    <property type="entry name" value="CHORISMATE_SYNTHASE_1"/>
    <property type="match status" value="1"/>
</dbReference>
<dbReference type="PROSITE" id="PS00788">
    <property type="entry name" value="CHORISMATE_SYNTHASE_2"/>
    <property type="match status" value="1"/>
</dbReference>
<dbReference type="PROSITE" id="PS00789">
    <property type="entry name" value="CHORISMATE_SYNTHASE_3"/>
    <property type="match status" value="1"/>
</dbReference>
<sequence length="365" mass="39059">MAGNVFGQMFRITTWGESHGKAVGVVVDGLPAGLPFSEADIQKELDRRRPGQSEVSTPRHEADRVEILSGIFEGMSTGTPVSMLVWNSDARSSAYDVIKDTPRPGHADFTYMARYGMRDHRGGGRSSARETIGRVAGGALAKLLLSRFGILIAGHVLELGALRAKPLSFEEILENVEKTPVRCADLEAAEKMLEKVAALRQEGDSIGGIVELIIRGVPAGLGEPVFDRLDADLAKALMSIPAVKGFEIGAGFEAARLYGSEMNDPFRIKEGKITTSSNNAGGILGGISTGLDIVCRAAVKPTPSIGKVQQTVDLKTLENTEIAIKGRHDPTIPPRMVPVAEAMVALVIADHMLRSGFINPRTLLE</sequence>
<name>AROC_METBF</name>
<accession>Q46CJ6</accession>
<evidence type="ECO:0000255" key="1">
    <source>
        <dbReference type="HAMAP-Rule" id="MF_00300"/>
    </source>
</evidence>
<evidence type="ECO:0000256" key="2">
    <source>
        <dbReference type="SAM" id="MobiDB-lite"/>
    </source>
</evidence>
<comment type="function">
    <text evidence="1">Catalyzes the anti-1,4-elimination of the C-3 phosphate and the C-6 proR hydrogen from 5-enolpyruvylshikimate-3-phosphate (EPSP) to yield chorismate, which is the branch point compound that serves as the starting substrate for the three terminal pathways of aromatic amino acid biosynthesis. This reaction introduces a second double bond into the aromatic ring system.</text>
</comment>
<comment type="catalytic activity">
    <reaction evidence="1">
        <text>5-O-(1-carboxyvinyl)-3-phosphoshikimate = chorismate + phosphate</text>
        <dbReference type="Rhea" id="RHEA:21020"/>
        <dbReference type="ChEBI" id="CHEBI:29748"/>
        <dbReference type="ChEBI" id="CHEBI:43474"/>
        <dbReference type="ChEBI" id="CHEBI:57701"/>
        <dbReference type="EC" id="4.2.3.5"/>
    </reaction>
</comment>
<comment type="cofactor">
    <cofactor evidence="1">
        <name>FMNH2</name>
        <dbReference type="ChEBI" id="CHEBI:57618"/>
    </cofactor>
    <text evidence="1">Reduced FMN (FMNH(2)).</text>
</comment>
<comment type="pathway">
    <text evidence="1">Metabolic intermediate biosynthesis; chorismate biosynthesis; chorismate from D-erythrose 4-phosphate and phosphoenolpyruvate: step 7/7.</text>
</comment>
<comment type="similarity">
    <text evidence="1">Belongs to the chorismate synthase family.</text>
</comment>
<reference key="1">
    <citation type="journal article" date="2006" name="J. Bacteriol.">
        <title>The Methanosarcina barkeri genome: comparative analysis with Methanosarcina acetivorans and Methanosarcina mazei reveals extensive rearrangement within methanosarcinal genomes.</title>
        <authorList>
            <person name="Maeder D.L."/>
            <person name="Anderson I."/>
            <person name="Brettin T.S."/>
            <person name="Bruce D.C."/>
            <person name="Gilna P."/>
            <person name="Han C.S."/>
            <person name="Lapidus A."/>
            <person name="Metcalf W.W."/>
            <person name="Saunders E."/>
            <person name="Tapia R."/>
            <person name="Sowers K.R."/>
        </authorList>
    </citation>
    <scope>NUCLEOTIDE SEQUENCE [LARGE SCALE GENOMIC DNA]</scope>
    <source>
        <strain>Fusaro / DSM 804</strain>
    </source>
</reference>
<protein>
    <recommendedName>
        <fullName evidence="1">Chorismate synthase</fullName>
        <shortName evidence="1">CS</shortName>
        <ecNumber evidence="1">4.2.3.5</ecNumber>
    </recommendedName>
    <alternativeName>
        <fullName evidence="1">5-enolpyruvylshikimate-3-phosphate phospholyase</fullName>
    </alternativeName>
</protein>
<proteinExistence type="inferred from homology"/>
<feature type="chain" id="PRO_0000256366" description="Chorismate synthase">
    <location>
        <begin position="1"/>
        <end position="365"/>
    </location>
</feature>
<feature type="region of interest" description="Disordered" evidence="2">
    <location>
        <begin position="41"/>
        <end position="61"/>
    </location>
</feature>
<feature type="binding site" evidence="1">
    <location>
        <position position="48"/>
    </location>
    <ligand>
        <name>NADP(+)</name>
        <dbReference type="ChEBI" id="CHEBI:58349"/>
    </ligand>
</feature>
<feature type="binding site" evidence="1">
    <location>
        <begin position="125"/>
        <end position="127"/>
    </location>
    <ligand>
        <name>FMN</name>
        <dbReference type="ChEBI" id="CHEBI:58210"/>
    </ligand>
</feature>
<feature type="binding site" evidence="1">
    <location>
        <position position="285"/>
    </location>
    <ligand>
        <name>FMN</name>
        <dbReference type="ChEBI" id="CHEBI:58210"/>
    </ligand>
</feature>
<feature type="binding site" evidence="1">
    <location>
        <begin position="300"/>
        <end position="304"/>
    </location>
    <ligand>
        <name>FMN</name>
        <dbReference type="ChEBI" id="CHEBI:58210"/>
    </ligand>
</feature>
<feature type="binding site" evidence="1">
    <location>
        <position position="327"/>
    </location>
    <ligand>
        <name>FMN</name>
        <dbReference type="ChEBI" id="CHEBI:58210"/>
    </ligand>
</feature>